<evidence type="ECO:0000255" key="1"/>
<evidence type="ECO:0000269" key="2">
    <source>
    </source>
</evidence>
<evidence type="ECO:0000303" key="3">
    <source>
    </source>
</evidence>
<evidence type="ECO:0000305" key="4"/>
<evidence type="ECO:0000312" key="5">
    <source>
        <dbReference type="EMBL" id="BAA19683.1"/>
    </source>
</evidence>
<feature type="chain" id="PRO_0000361663" description="Keratin-associated protein 19-5">
    <location>
        <begin position="1"/>
        <end position="62"/>
    </location>
</feature>
<feature type="region of interest" description="14 X 2 AA repeats of G-[YCGS]" evidence="1">
    <location>
        <begin position="5"/>
        <end position="56"/>
    </location>
</feature>
<reference evidence="4 5" key="1">
    <citation type="journal article" date="1997" name="J. Biol. Chem.">
        <title>Isolation and characterization of mouse high-glycine/tyrosine proteins.</title>
        <authorList>
            <person name="Aoki N."/>
            <person name="Ito K."/>
            <person name="Ito M."/>
        </authorList>
    </citation>
    <scope>NUCLEOTIDE SEQUENCE [MRNA]</scope>
    <scope>TISSUE SPECIFICITY</scope>
    <source>
        <tissue evidence="5">Skin</tissue>
    </source>
</reference>
<protein>
    <recommendedName>
        <fullName>Keratin-associated protein 19-5</fullName>
    </recommendedName>
    <alternativeName>
        <fullName evidence="5">Glycine tyrosine-rich hair protein</fullName>
    </alternativeName>
    <alternativeName>
        <fullName evidence="3">High-glycine tyrosine keratin type 1 alpha</fullName>
        <shortName evidence="3">HGTp type 1 alpha</shortName>
    </alternativeName>
    <alternativeName>
        <fullName>Keratin-associated protein 8-2</fullName>
    </alternativeName>
</protein>
<dbReference type="EMBL" id="D86422">
    <property type="protein sequence ID" value="BAA19683.1"/>
    <property type="molecule type" value="mRNA"/>
</dbReference>
<dbReference type="CCDS" id="CCDS37388.1"/>
<dbReference type="RefSeq" id="NP_034806.2">
    <property type="nucleotide sequence ID" value="NM_010676.2"/>
</dbReference>
<dbReference type="STRING" id="10090.ENSMUSP00000055511"/>
<dbReference type="PaxDb" id="10090-ENSMUSP00000055511"/>
<dbReference type="ProteomicsDB" id="263675"/>
<dbReference type="DNASU" id="16704"/>
<dbReference type="GeneID" id="16704"/>
<dbReference type="KEGG" id="mmu:16704"/>
<dbReference type="AGR" id="MGI:1330295"/>
<dbReference type="CTD" id="337972"/>
<dbReference type="MGI" id="MGI:1330295">
    <property type="gene designation" value="Krtap19-5"/>
</dbReference>
<dbReference type="eggNOG" id="ENOG502TDP7">
    <property type="taxonomic scope" value="Eukaryota"/>
</dbReference>
<dbReference type="InParanoid" id="O08632"/>
<dbReference type="Reactome" id="R-MMU-6805567">
    <property type="pathway name" value="Keratinization"/>
</dbReference>
<dbReference type="BioGRID-ORCS" id="16704">
    <property type="hits" value="1 hit in 76 CRISPR screens"/>
</dbReference>
<dbReference type="PRO" id="PR:O08632"/>
<dbReference type="Proteomes" id="UP000000589">
    <property type="component" value="Unplaced"/>
</dbReference>
<dbReference type="RNAct" id="O08632">
    <property type="molecule type" value="protein"/>
</dbReference>
<dbReference type="GO" id="GO:0005829">
    <property type="term" value="C:cytosol"/>
    <property type="evidence" value="ECO:0007669"/>
    <property type="project" value="UniProtKB-ARBA"/>
</dbReference>
<dbReference type="GO" id="GO:0005882">
    <property type="term" value="C:intermediate filament"/>
    <property type="evidence" value="ECO:0007669"/>
    <property type="project" value="UniProtKB-KW"/>
</dbReference>
<dbReference type="InterPro" id="IPR021743">
    <property type="entry name" value="KRTAP_type8/19/20/21/22"/>
</dbReference>
<dbReference type="InterPro" id="IPR051528">
    <property type="entry name" value="KRTAP_type_19"/>
</dbReference>
<dbReference type="PANTHER" id="PTHR38140">
    <property type="entry name" value="KERATIN-ASSOCIATED PROTEIN 19-3-RELATED"/>
    <property type="match status" value="1"/>
</dbReference>
<dbReference type="PANTHER" id="PTHR38140:SF5">
    <property type="entry name" value="KERATIN-ASSOCIATED PROTEIN 19-4-RELATED"/>
    <property type="match status" value="1"/>
</dbReference>
<dbReference type="Pfam" id="PF11759">
    <property type="entry name" value="KRTAP"/>
    <property type="match status" value="1"/>
</dbReference>
<organism>
    <name type="scientific">Mus musculus</name>
    <name type="common">Mouse</name>
    <dbReference type="NCBI Taxonomy" id="10090"/>
    <lineage>
        <taxon>Eukaryota</taxon>
        <taxon>Metazoa</taxon>
        <taxon>Chordata</taxon>
        <taxon>Craniata</taxon>
        <taxon>Vertebrata</taxon>
        <taxon>Euteleostomi</taxon>
        <taxon>Mammalia</taxon>
        <taxon>Eutheria</taxon>
        <taxon>Euarchontoglires</taxon>
        <taxon>Glires</taxon>
        <taxon>Rodentia</taxon>
        <taxon>Myomorpha</taxon>
        <taxon>Muroidea</taxon>
        <taxon>Muridae</taxon>
        <taxon>Murinae</taxon>
        <taxon>Mus</taxon>
        <taxon>Mus</taxon>
    </lineage>
</organism>
<gene>
    <name type="primary">Krtap19-5</name>
    <name type="synonym">Krtap8-2</name>
</gene>
<accession>O08632</accession>
<name>KR195_MOUSE</name>
<sequence>MSYYGSYYGGLGSGIRGFGNLGYGYGCGCGFGGYGYGSGYGRYGYGYPRPLYYGGYGFSRFY</sequence>
<keyword id="KW-0416">Keratin</keyword>
<keyword id="KW-1185">Reference proteome</keyword>
<keyword id="KW-0677">Repeat</keyword>
<comment type="function">
    <text evidence="4">In the hair cortex, hair keratin intermediate filaments are embedded in an interfilamentous matrix, consisting of hair keratin-associated proteins (KRTAP), which are essential for the formation of a rigid and resistant hair shaft through their extensive disulfide bond cross-linking with abundant cysteine residues of hair keratins. The matrix proteins include the high-sulfur and high-glycine-tyrosine keratins.</text>
</comment>
<comment type="subunit">
    <text evidence="4">Interacts with hair keratins.</text>
</comment>
<comment type="tissue specificity">
    <text evidence="2">Expressed in skin during two hair growth cycles. Expression restricted to the cortical cells of hair follicles, appearing first in the cortical cells processing the flat nuclei located a few cells above the dermal papilla.</text>
</comment>
<comment type="similarity">
    <text evidence="4">Belongs to the KRTAP type 19 family.</text>
</comment>
<proteinExistence type="evidence at transcript level"/>